<protein>
    <recommendedName>
        <fullName>Probable beta-glucosidase D</fullName>
        <ecNumber>3.2.1.21</ecNumber>
    </recommendedName>
    <alternativeName>
        <fullName>Beta-D-glucoside glucohydrolase D</fullName>
    </alternativeName>
    <alternativeName>
        <fullName>Cellobiase D</fullName>
    </alternativeName>
    <alternativeName>
        <fullName>Gentiobiase D</fullName>
    </alternativeName>
</protein>
<organism>
    <name type="scientific">Aspergillus flavus (strain ATCC 200026 / FGSC A1120 / IAM 13836 / NRRL 3357 / JCM 12722 / SRRC 167)</name>
    <dbReference type="NCBI Taxonomy" id="332952"/>
    <lineage>
        <taxon>Eukaryota</taxon>
        <taxon>Fungi</taxon>
        <taxon>Dikarya</taxon>
        <taxon>Ascomycota</taxon>
        <taxon>Pezizomycotina</taxon>
        <taxon>Eurotiomycetes</taxon>
        <taxon>Eurotiomycetidae</taxon>
        <taxon>Eurotiales</taxon>
        <taxon>Aspergillaceae</taxon>
        <taxon>Aspergillus</taxon>
        <taxon>Aspergillus subgen. Circumdati</taxon>
    </lineage>
</organism>
<gene>
    <name type="primary">bglD</name>
    <name type="ORF">AFLA_066750</name>
</gene>
<evidence type="ECO:0000250" key="1"/>
<evidence type="ECO:0000255" key="2"/>
<evidence type="ECO:0000305" key="3"/>
<accession>B8NJF4</accession>
<proteinExistence type="inferred from homology"/>
<keyword id="KW-0119">Carbohydrate metabolism</keyword>
<keyword id="KW-0136">Cellulose degradation</keyword>
<keyword id="KW-0325">Glycoprotein</keyword>
<keyword id="KW-0326">Glycosidase</keyword>
<keyword id="KW-0378">Hydrolase</keyword>
<keyword id="KW-0624">Polysaccharide degradation</keyword>
<keyword id="KW-0964">Secreted</keyword>
<keyword id="KW-0732">Signal</keyword>
<dbReference type="EC" id="3.2.1.21"/>
<dbReference type="EMBL" id="EQ963479">
    <property type="protein sequence ID" value="EED49853.1"/>
    <property type="status" value="ALT_SEQ"/>
    <property type="molecule type" value="Genomic_DNA"/>
</dbReference>
<dbReference type="RefSeq" id="XP_002380234.1">
    <property type="nucleotide sequence ID" value="XM_002380193.1"/>
</dbReference>
<dbReference type="SMR" id="B8NJF4"/>
<dbReference type="STRING" id="332952.B8NJF4"/>
<dbReference type="GlyCosmos" id="B8NJF4">
    <property type="glycosylation" value="12 sites, No reported glycans"/>
</dbReference>
<dbReference type="EnsemblFungi" id="EED49853">
    <property type="protein sequence ID" value="EED49853"/>
    <property type="gene ID" value="AFLA_066750"/>
</dbReference>
<dbReference type="VEuPathDB" id="FungiDB:AFLA_008611"/>
<dbReference type="eggNOG" id="ENOG502R4T1">
    <property type="taxonomic scope" value="Eukaryota"/>
</dbReference>
<dbReference type="UniPathway" id="UPA00696"/>
<dbReference type="GO" id="GO:0005576">
    <property type="term" value="C:extracellular region"/>
    <property type="evidence" value="ECO:0007669"/>
    <property type="project" value="UniProtKB-SubCell"/>
</dbReference>
<dbReference type="GO" id="GO:0008422">
    <property type="term" value="F:beta-glucosidase activity"/>
    <property type="evidence" value="ECO:0007669"/>
    <property type="project" value="UniProtKB-EC"/>
</dbReference>
<dbReference type="GO" id="GO:0030245">
    <property type="term" value="P:cellulose catabolic process"/>
    <property type="evidence" value="ECO:0007669"/>
    <property type="project" value="UniProtKB-UniPathway"/>
</dbReference>
<dbReference type="FunFam" id="2.60.40.10:FF:000757">
    <property type="entry name" value="Beta-glucosidase G"/>
    <property type="match status" value="1"/>
</dbReference>
<dbReference type="FunFam" id="3.20.20.300:FF:000002">
    <property type="entry name" value="Probable beta-glucosidase"/>
    <property type="match status" value="1"/>
</dbReference>
<dbReference type="FunFam" id="3.40.50.1700:FF:000021">
    <property type="entry name" value="Probable beta-glucosidase D"/>
    <property type="match status" value="1"/>
</dbReference>
<dbReference type="Gene3D" id="3.40.50.1700">
    <property type="entry name" value="Glycoside hydrolase family 3 C-terminal domain"/>
    <property type="match status" value="1"/>
</dbReference>
<dbReference type="Gene3D" id="3.20.20.300">
    <property type="entry name" value="Glycoside hydrolase, family 3, N-terminal domain"/>
    <property type="match status" value="1"/>
</dbReference>
<dbReference type="Gene3D" id="2.60.40.10">
    <property type="entry name" value="Immunoglobulins"/>
    <property type="match status" value="1"/>
</dbReference>
<dbReference type="InterPro" id="IPR050288">
    <property type="entry name" value="Cellulose_deg_GH3"/>
</dbReference>
<dbReference type="InterPro" id="IPR026891">
    <property type="entry name" value="Fn3-like"/>
</dbReference>
<dbReference type="InterPro" id="IPR002772">
    <property type="entry name" value="Glyco_hydro_3_C"/>
</dbReference>
<dbReference type="InterPro" id="IPR036881">
    <property type="entry name" value="Glyco_hydro_3_C_sf"/>
</dbReference>
<dbReference type="InterPro" id="IPR001764">
    <property type="entry name" value="Glyco_hydro_3_N"/>
</dbReference>
<dbReference type="InterPro" id="IPR036962">
    <property type="entry name" value="Glyco_hydro_3_N_sf"/>
</dbReference>
<dbReference type="InterPro" id="IPR017853">
    <property type="entry name" value="Glycoside_hydrolase_SF"/>
</dbReference>
<dbReference type="InterPro" id="IPR013783">
    <property type="entry name" value="Ig-like_fold"/>
</dbReference>
<dbReference type="PANTHER" id="PTHR42715">
    <property type="entry name" value="BETA-GLUCOSIDASE"/>
    <property type="match status" value="1"/>
</dbReference>
<dbReference type="PANTHER" id="PTHR42715:SF14">
    <property type="entry name" value="BETA-GLUCOSIDASE D-RELATED"/>
    <property type="match status" value="1"/>
</dbReference>
<dbReference type="Pfam" id="PF14310">
    <property type="entry name" value="Fn3-like"/>
    <property type="match status" value="1"/>
</dbReference>
<dbReference type="Pfam" id="PF00933">
    <property type="entry name" value="Glyco_hydro_3"/>
    <property type="match status" value="1"/>
</dbReference>
<dbReference type="Pfam" id="PF01915">
    <property type="entry name" value="Glyco_hydro_3_C"/>
    <property type="match status" value="1"/>
</dbReference>
<dbReference type="PRINTS" id="PR00133">
    <property type="entry name" value="GLHYDRLASE3"/>
</dbReference>
<dbReference type="SMART" id="SM01217">
    <property type="entry name" value="Fn3_like"/>
    <property type="match status" value="1"/>
</dbReference>
<dbReference type="SUPFAM" id="SSF51445">
    <property type="entry name" value="(Trans)glycosidases"/>
    <property type="match status" value="1"/>
</dbReference>
<dbReference type="SUPFAM" id="SSF52279">
    <property type="entry name" value="Beta-D-glucan exohydrolase, C-terminal domain"/>
    <property type="match status" value="1"/>
</dbReference>
<reference key="1">
    <citation type="journal article" date="2015" name="Genome Announc.">
        <title>Genome sequence of Aspergillus flavus NRRL 3357, a strain that causes aflatoxin contamination of food and feed.</title>
        <authorList>
            <person name="Nierman W.C."/>
            <person name="Yu J."/>
            <person name="Fedorova-Abrams N.D."/>
            <person name="Losada L."/>
            <person name="Cleveland T.E."/>
            <person name="Bhatnagar D."/>
            <person name="Bennett J.W."/>
            <person name="Dean R."/>
            <person name="Payne G.A."/>
        </authorList>
    </citation>
    <scope>NUCLEOTIDE SEQUENCE [LARGE SCALE GENOMIC DNA]</scope>
    <source>
        <strain>ATCC 200026 / FGSC A1120 / IAM 13836 / NRRL 3357 / JCM 12722 / SRRC 167</strain>
    </source>
</reference>
<name>BGLD_ASPFN</name>
<sequence>MRFVSLAVGAALLGAAGASSISSNVGLLKANGVALGNWEAAYEKASAFVSGLTTDQKLALITGSNVESTNGNFTPLYFLDGDMGLQDFYYVSAFSLSSALAMTWDRDAIYEQAKAVGSEFYNKGVQVVAGPTSQPLGRTPWGGRGVEGFGPDPYLNGLATGLTTKGYVDAGVIPGGKHFLLYEQETNRTSSFGSSGEGSPYSSNADDKTIHETYLWPFYDAVKNGAGAVMCAMTKVNGTMACENSDLLMKMLKTELGFPGMVWPDMNGQNSAKGSALGGEDYGSSSIWSTSTMESFLSNGTLSEARLNDMAIRNLIGYYYVNLDNGRQPTRQTTDVYVDVRANHSKLIRENGAKSMALLKNEGVLPLSKPRVMSIFGAHAGPIMGGPNSNVDVMGSGPTYQGHLATGSGSGMASMPYLITPYGALTNKAAQDGTVLRWVLNDTYSSGGGSSLVPSSTSSTAVEPSFENFATGSDICLVFINALAGEGADRTELYNADQDAMVNTVADNCNNTVAVVNTVGPRLLDQWIEHDNVTAVLYGSLLGQESGNSIVDLLYGDVNPSGRLVHTIAKNESDYNVGLCYTAQCNFTEGVYLDYRYFDAHNITPRYPFGHGLSYTTFHYSSLAIKAPSSITKAPKGNLTVGGPSDLWDVVGTVSARIANNGTLSGAEVPQLYLGFPDSADQPVRQLRGFDRVELSAGQEAVVTFNLRRRDISYWNVKTQQWMVAGGKYTVFVGGSSRDLRLNGTFFLWVGS</sequence>
<feature type="signal peptide" evidence="2">
    <location>
        <begin position="1"/>
        <end position="18"/>
    </location>
</feature>
<feature type="chain" id="PRO_0000394106" description="Probable beta-glucosidase D">
    <location>
        <begin position="19"/>
        <end position="752"/>
    </location>
</feature>
<feature type="active site" evidence="1">
    <location>
        <position position="265"/>
    </location>
</feature>
<feature type="glycosylation site" description="N-linked (GlcNAc...) asparagine" evidence="2">
    <location>
        <position position="187"/>
    </location>
</feature>
<feature type="glycosylation site" description="N-linked (GlcNAc...) asparagine" evidence="2">
    <location>
        <position position="237"/>
    </location>
</feature>
<feature type="glycosylation site" description="N-linked (GlcNAc...) asparagine" evidence="2">
    <location>
        <position position="299"/>
    </location>
</feature>
<feature type="glycosylation site" description="N-linked (GlcNAc...) asparagine" evidence="2">
    <location>
        <position position="343"/>
    </location>
</feature>
<feature type="glycosylation site" description="N-linked (GlcNAc...) asparagine" evidence="2">
    <location>
        <position position="441"/>
    </location>
</feature>
<feature type="glycosylation site" description="N-linked (GlcNAc...) asparagine" evidence="2">
    <location>
        <position position="510"/>
    </location>
</feature>
<feature type="glycosylation site" description="N-linked (GlcNAc...) asparagine" evidence="2">
    <location>
        <position position="532"/>
    </location>
</feature>
<feature type="glycosylation site" description="N-linked (GlcNAc...) asparagine" evidence="2">
    <location>
        <position position="571"/>
    </location>
</feature>
<feature type="glycosylation site" description="N-linked (GlcNAc...) asparagine" evidence="2">
    <location>
        <position position="586"/>
    </location>
</feature>
<feature type="glycosylation site" description="N-linked (GlcNAc...) asparagine" evidence="2">
    <location>
        <position position="638"/>
    </location>
</feature>
<feature type="glycosylation site" description="N-linked (GlcNAc...) asparagine" evidence="2">
    <location>
        <position position="661"/>
    </location>
</feature>
<feature type="glycosylation site" description="N-linked (GlcNAc...) asparagine" evidence="2">
    <location>
        <position position="743"/>
    </location>
</feature>
<comment type="function">
    <text evidence="1">Beta-glucosidases are one of a number of cellulolytic enzymes involved in the degradation of cellulosic biomass. Catalyzes the last step releasing glucose from the inhibitory cellobiose (By similarity).</text>
</comment>
<comment type="catalytic activity">
    <reaction>
        <text>Hydrolysis of terminal, non-reducing beta-D-glucosyl residues with release of beta-D-glucose.</text>
        <dbReference type="EC" id="3.2.1.21"/>
    </reaction>
</comment>
<comment type="pathway">
    <text>Glycan metabolism; cellulose degradation.</text>
</comment>
<comment type="subcellular location">
    <subcellularLocation>
        <location evidence="1">Secreted</location>
    </subcellularLocation>
</comment>
<comment type="similarity">
    <text evidence="3">Belongs to the glycosyl hydrolase 3 family.</text>
</comment>
<comment type="sequence caution" evidence="3">
    <conflict type="erroneous gene model prediction">
        <sequence resource="EMBL-CDS" id="EED49853"/>
    </conflict>
</comment>